<proteinExistence type="evidence at protein level"/>
<keyword id="KW-0027">Amidation</keyword>
<keyword id="KW-0903">Direct protein sequencing</keyword>
<keyword id="KW-0527">Neuropeptide</keyword>
<keyword id="KW-0964">Secreted</keyword>
<sequence>ARTDNFVRL</sequence>
<protein>
    <recommendedName>
        <fullName evidence="4">Extended FMRFamide-8</fullName>
        <shortName evidence="4">FMRFa-8</shortName>
    </recommendedName>
</protein>
<evidence type="ECO:0000250" key="1">
    <source>
        <dbReference type="UniProtKB" id="P34405"/>
    </source>
</evidence>
<evidence type="ECO:0000255" key="2"/>
<evidence type="ECO:0000269" key="3">
    <source>
    </source>
</evidence>
<evidence type="ECO:0000303" key="4">
    <source>
    </source>
</evidence>
<evidence type="ECO:0000305" key="5"/>
<evidence type="ECO:0000305" key="6">
    <source>
    </source>
</evidence>
<organism>
    <name type="scientific">Karoophasma botterkloofense</name>
    <name type="common">Gladiator</name>
    <name type="synonym">Heel-walker</name>
    <dbReference type="NCBI Taxonomy" id="253132"/>
    <lineage>
        <taxon>Eukaryota</taxon>
        <taxon>Metazoa</taxon>
        <taxon>Ecdysozoa</taxon>
        <taxon>Arthropoda</taxon>
        <taxon>Hexapoda</taxon>
        <taxon>Insecta</taxon>
        <taxon>Pterygota</taxon>
        <taxon>Neoptera</taxon>
        <taxon>Polyneoptera</taxon>
        <taxon>Mantophasmatodea</taxon>
        <taxon>Austrophasmatidae</taxon>
        <taxon>Karoophasma</taxon>
    </lineage>
</organism>
<comment type="function">
    <text evidence="1">FMRFamides and FMRFamide-like peptides are neuropeptides.</text>
</comment>
<comment type="subcellular location">
    <subcellularLocation>
        <location evidence="6">Secreted</location>
    </subcellularLocation>
</comment>
<comment type="similarity">
    <text evidence="2">Belongs to the FARP (FMRF amide related peptide) family.</text>
</comment>
<reference evidence="5" key="1">
    <citation type="journal article" date="2012" name="Syst. Biol.">
        <title>Peptidomics-based phylogeny and biogeography of Mantophasmatodea (Hexapoda).</title>
        <authorList>
            <person name="Predel R."/>
            <person name="Neupert S."/>
            <person name="Huetteroth W."/>
            <person name="Kahnt J."/>
            <person name="Waidelich D."/>
            <person name="Roth S."/>
        </authorList>
    </citation>
    <scope>PROTEIN SEQUENCE</scope>
    <scope>AMIDATION AT LEU-9</scope>
    <source>
        <tissue evidence="3">Thoracic perisympathetic organs</tissue>
    </source>
</reference>
<dbReference type="GO" id="GO:0005576">
    <property type="term" value="C:extracellular region"/>
    <property type="evidence" value="ECO:0007669"/>
    <property type="project" value="UniProtKB-SubCell"/>
</dbReference>
<dbReference type="GO" id="GO:0007218">
    <property type="term" value="P:neuropeptide signaling pathway"/>
    <property type="evidence" value="ECO:0007669"/>
    <property type="project" value="UniProtKB-KW"/>
</dbReference>
<name>FAR8_KARBO</name>
<feature type="peptide" id="PRO_0000421533" description="Extended FMRFamide-8" evidence="3">
    <location>
        <begin position="1"/>
        <end position="9"/>
    </location>
</feature>
<feature type="modified residue" description="Leucine amide" evidence="3">
    <location>
        <position position="9"/>
    </location>
</feature>
<feature type="unsure residue" description="L or I" evidence="3">
    <location>
        <position position="9"/>
    </location>
</feature>
<accession>B0M8U6</accession>